<keyword id="KW-0067">ATP-binding</keyword>
<keyword id="KW-0342">GTP-binding</keyword>
<keyword id="KW-0547">Nucleotide-binding</keyword>
<proteinExistence type="inferred from homology"/>
<organism>
    <name type="scientific">Deinococcus geothermalis (strain DSM 11300 / CIP 105573 / AG-3a)</name>
    <dbReference type="NCBI Taxonomy" id="319795"/>
    <lineage>
        <taxon>Bacteria</taxon>
        <taxon>Thermotogati</taxon>
        <taxon>Deinococcota</taxon>
        <taxon>Deinococci</taxon>
        <taxon>Deinococcales</taxon>
        <taxon>Deinococcaceae</taxon>
        <taxon>Deinococcus</taxon>
    </lineage>
</organism>
<reference key="1">
    <citation type="submission" date="2006-04" db="EMBL/GenBank/DDBJ databases">
        <title>Complete sequence of chromosome of Deinococcus geothermalis DSM 11300.</title>
        <authorList>
            <person name="Copeland A."/>
            <person name="Lucas S."/>
            <person name="Lapidus A."/>
            <person name="Barry K."/>
            <person name="Detter J.C."/>
            <person name="Glavina del Rio T."/>
            <person name="Hammon N."/>
            <person name="Israni S."/>
            <person name="Dalin E."/>
            <person name="Tice H."/>
            <person name="Pitluck S."/>
            <person name="Brettin T."/>
            <person name="Bruce D."/>
            <person name="Han C."/>
            <person name="Tapia R."/>
            <person name="Saunders E."/>
            <person name="Gilna P."/>
            <person name="Schmutz J."/>
            <person name="Larimer F."/>
            <person name="Land M."/>
            <person name="Hauser L."/>
            <person name="Kyrpides N."/>
            <person name="Kim E."/>
            <person name="Daly M.J."/>
            <person name="Fredrickson J.K."/>
            <person name="Makarova K.S."/>
            <person name="Gaidamakova E.K."/>
            <person name="Zhai M."/>
            <person name="Richardson P."/>
        </authorList>
    </citation>
    <scope>NUCLEOTIDE SEQUENCE [LARGE SCALE GENOMIC DNA]</scope>
    <source>
        <strain>DSM 11300 / CIP 105573 / AG-3a</strain>
    </source>
</reference>
<dbReference type="EMBL" id="CP000359">
    <property type="protein sequence ID" value="ABF45025.1"/>
    <property type="status" value="ALT_INIT"/>
    <property type="molecule type" value="Genomic_DNA"/>
</dbReference>
<dbReference type="SMR" id="Q1J0F9"/>
<dbReference type="STRING" id="319795.Dgeo_0723"/>
<dbReference type="KEGG" id="dge:Dgeo_0723"/>
<dbReference type="eggNOG" id="COG1660">
    <property type="taxonomic scope" value="Bacteria"/>
</dbReference>
<dbReference type="HOGENOM" id="CLU_059558_0_0_0"/>
<dbReference type="Proteomes" id="UP000002431">
    <property type="component" value="Chromosome"/>
</dbReference>
<dbReference type="GO" id="GO:0005524">
    <property type="term" value="F:ATP binding"/>
    <property type="evidence" value="ECO:0007669"/>
    <property type="project" value="UniProtKB-UniRule"/>
</dbReference>
<dbReference type="GO" id="GO:0005525">
    <property type="term" value="F:GTP binding"/>
    <property type="evidence" value="ECO:0007669"/>
    <property type="project" value="UniProtKB-UniRule"/>
</dbReference>
<dbReference type="Gene3D" id="3.40.50.300">
    <property type="entry name" value="P-loop containing nucleotide triphosphate hydrolases"/>
    <property type="match status" value="1"/>
</dbReference>
<dbReference type="HAMAP" id="MF_00636">
    <property type="entry name" value="RapZ_like"/>
    <property type="match status" value="1"/>
</dbReference>
<dbReference type="InterPro" id="IPR027417">
    <property type="entry name" value="P-loop_NTPase"/>
</dbReference>
<dbReference type="InterPro" id="IPR005337">
    <property type="entry name" value="RapZ-like"/>
</dbReference>
<dbReference type="InterPro" id="IPR053930">
    <property type="entry name" value="RapZ-like_N"/>
</dbReference>
<dbReference type="InterPro" id="IPR053931">
    <property type="entry name" value="RapZ_C"/>
</dbReference>
<dbReference type="NCBIfam" id="NF003828">
    <property type="entry name" value="PRK05416.1"/>
    <property type="match status" value="1"/>
</dbReference>
<dbReference type="PANTHER" id="PTHR30448">
    <property type="entry name" value="RNASE ADAPTER PROTEIN RAPZ"/>
    <property type="match status" value="1"/>
</dbReference>
<dbReference type="PANTHER" id="PTHR30448:SF0">
    <property type="entry name" value="RNASE ADAPTER PROTEIN RAPZ"/>
    <property type="match status" value="1"/>
</dbReference>
<dbReference type="Pfam" id="PF22740">
    <property type="entry name" value="PapZ_C"/>
    <property type="match status" value="1"/>
</dbReference>
<dbReference type="Pfam" id="PF03668">
    <property type="entry name" value="RapZ-like_N"/>
    <property type="match status" value="1"/>
</dbReference>
<dbReference type="PIRSF" id="PIRSF005052">
    <property type="entry name" value="P-loopkin"/>
    <property type="match status" value="1"/>
</dbReference>
<dbReference type="SUPFAM" id="SSF52540">
    <property type="entry name" value="P-loop containing nucleoside triphosphate hydrolases"/>
    <property type="match status" value="1"/>
</dbReference>
<accession>Q1J0F9</accession>
<feature type="chain" id="PRO_0000258959" description="Nucleotide-binding protein Dgeo_0723">
    <location>
        <begin position="1"/>
        <end position="280"/>
    </location>
</feature>
<feature type="binding site" evidence="1">
    <location>
        <begin position="8"/>
        <end position="15"/>
    </location>
    <ligand>
        <name>ATP</name>
        <dbReference type="ChEBI" id="CHEBI:30616"/>
    </ligand>
</feature>
<feature type="binding site" evidence="1">
    <location>
        <begin position="57"/>
        <end position="60"/>
    </location>
    <ligand>
        <name>GTP</name>
        <dbReference type="ChEBI" id="CHEBI:37565"/>
    </ligand>
</feature>
<sequence length="280" mass="31200">MPFVVVSGLSGSGKSTALRTLEDAGFFITDNLPPELWGAMHDLATARGLERVAVSTDARTRFFLGALEDSYLRLSRRREDLRVLFLEATSEVLLRRYNLTRREHPLGETLLVDFARERELLAPLRALADIVIDTTDLTAAELSQKVLQMLRLEQDFHLRLLSFGFKHAPPRDADLVIDVRSLPNPYYVPELRPRTGLEPAVAGYVFRDEASEQFYREVRDFVRLAAGRARAAGRHGYTVAIGCTGGQHRSVAVAERLAADLTDLGAQVTDHRDMQVGEGG</sequence>
<gene>
    <name type="ordered locus">Dgeo_0723</name>
</gene>
<protein>
    <recommendedName>
        <fullName evidence="1">Nucleotide-binding protein Dgeo_0723</fullName>
    </recommendedName>
</protein>
<evidence type="ECO:0000255" key="1">
    <source>
        <dbReference type="HAMAP-Rule" id="MF_00636"/>
    </source>
</evidence>
<evidence type="ECO:0000305" key="2"/>
<name>Y723_DEIGD</name>
<comment type="function">
    <text evidence="1">Displays ATPase and GTPase activities.</text>
</comment>
<comment type="similarity">
    <text evidence="1">Belongs to the RapZ-like family.</text>
</comment>
<comment type="sequence caution" evidence="2">
    <conflict type="erroneous initiation">
        <sequence resource="EMBL-CDS" id="ABF45025"/>
    </conflict>
</comment>